<protein>
    <recommendedName>
        <fullName evidence="1">Phosphopentomutase</fullName>
        <ecNumber evidence="1">5.4.2.7</ecNumber>
    </recommendedName>
    <alternativeName>
        <fullName evidence="1">Phosphodeoxyribomutase</fullName>
    </alternativeName>
</protein>
<sequence>MDIKRVTVIVLDGVGIGEAPDADEYGDVGSHSLANTAAAINGLDLPNMAALGLGCISEMQGVACPESFSGSYGKMQPLSKGKDTVSGHWEMMGIVLPTPFPVYPDGFPAAVIEPFKQKIGRGVLGNKSASGTDILEELGMEHIRTGDPIVYTSADSVFQIAAHEDVITPKELYAMCEIAREILVGEHAVGRVIARPFIGDSPETFKRTIRRHDYALTPETPTILDKVVAAGKQVYSVGKIDDIFGNRGISVSNHTVDNAASLEAVLEFLDVDFEGLLFANFIEFDMIYGHRNDPVGYANALKAVDQRLPELQAKLRAGDLVVITADHGVDPTTPGSNHSREYVPLLVFGPEVRSGVNLGTRQTLSDLAATIAEIFGLEQPLHGTSFLSELQ</sequence>
<proteinExistence type="inferred from homology"/>
<name>DEOB_HERA2</name>
<evidence type="ECO:0000255" key="1">
    <source>
        <dbReference type="HAMAP-Rule" id="MF_00740"/>
    </source>
</evidence>
<reference key="1">
    <citation type="journal article" date="2011" name="Stand. Genomic Sci.">
        <title>Complete genome sequence of the filamentous gliding predatory bacterium Herpetosiphon aurantiacus type strain (114-95(T)).</title>
        <authorList>
            <person name="Kiss H."/>
            <person name="Nett M."/>
            <person name="Domin N."/>
            <person name="Martin K."/>
            <person name="Maresca J.A."/>
            <person name="Copeland A."/>
            <person name="Lapidus A."/>
            <person name="Lucas S."/>
            <person name="Berry K.W."/>
            <person name="Glavina Del Rio T."/>
            <person name="Dalin E."/>
            <person name="Tice H."/>
            <person name="Pitluck S."/>
            <person name="Richardson P."/>
            <person name="Bruce D."/>
            <person name="Goodwin L."/>
            <person name="Han C."/>
            <person name="Detter J.C."/>
            <person name="Schmutz J."/>
            <person name="Brettin T."/>
            <person name="Land M."/>
            <person name="Hauser L."/>
            <person name="Kyrpides N.C."/>
            <person name="Ivanova N."/>
            <person name="Goeker M."/>
            <person name="Woyke T."/>
            <person name="Klenk H.P."/>
            <person name="Bryant D.A."/>
        </authorList>
    </citation>
    <scope>NUCLEOTIDE SEQUENCE [LARGE SCALE GENOMIC DNA]</scope>
    <source>
        <strain>ATCC 23779 / DSM 785 / 114-95</strain>
    </source>
</reference>
<dbReference type="EC" id="5.4.2.7" evidence="1"/>
<dbReference type="EMBL" id="CP000875">
    <property type="protein sequence ID" value="ABX05485.1"/>
    <property type="molecule type" value="Genomic_DNA"/>
</dbReference>
<dbReference type="SMR" id="A9B2N4"/>
<dbReference type="FunCoup" id="A9B2N4">
    <property type="interactions" value="54"/>
</dbReference>
<dbReference type="STRING" id="316274.Haur_2847"/>
<dbReference type="KEGG" id="hau:Haur_2847"/>
<dbReference type="eggNOG" id="COG1015">
    <property type="taxonomic scope" value="Bacteria"/>
</dbReference>
<dbReference type="HOGENOM" id="CLU_053861_0_0_0"/>
<dbReference type="InParanoid" id="A9B2N4"/>
<dbReference type="UniPathway" id="UPA00002">
    <property type="reaction ID" value="UER00467"/>
</dbReference>
<dbReference type="Proteomes" id="UP000000787">
    <property type="component" value="Chromosome"/>
</dbReference>
<dbReference type="GO" id="GO:0005829">
    <property type="term" value="C:cytosol"/>
    <property type="evidence" value="ECO:0007669"/>
    <property type="project" value="TreeGrafter"/>
</dbReference>
<dbReference type="GO" id="GO:0000287">
    <property type="term" value="F:magnesium ion binding"/>
    <property type="evidence" value="ECO:0007669"/>
    <property type="project" value="InterPro"/>
</dbReference>
<dbReference type="GO" id="GO:0030145">
    <property type="term" value="F:manganese ion binding"/>
    <property type="evidence" value="ECO:0007669"/>
    <property type="project" value="UniProtKB-UniRule"/>
</dbReference>
<dbReference type="GO" id="GO:0008973">
    <property type="term" value="F:phosphopentomutase activity"/>
    <property type="evidence" value="ECO:0007669"/>
    <property type="project" value="UniProtKB-UniRule"/>
</dbReference>
<dbReference type="GO" id="GO:0006018">
    <property type="term" value="P:2-deoxyribose 1-phosphate catabolic process"/>
    <property type="evidence" value="ECO:0007669"/>
    <property type="project" value="UniProtKB-UniRule"/>
</dbReference>
<dbReference type="GO" id="GO:0006015">
    <property type="term" value="P:5-phosphoribose 1-diphosphate biosynthetic process"/>
    <property type="evidence" value="ECO:0007669"/>
    <property type="project" value="UniProtKB-UniPathway"/>
</dbReference>
<dbReference type="GO" id="GO:0043094">
    <property type="term" value="P:metabolic compound salvage"/>
    <property type="evidence" value="ECO:0007669"/>
    <property type="project" value="InterPro"/>
</dbReference>
<dbReference type="GO" id="GO:0009117">
    <property type="term" value="P:nucleotide metabolic process"/>
    <property type="evidence" value="ECO:0007669"/>
    <property type="project" value="InterPro"/>
</dbReference>
<dbReference type="CDD" id="cd16009">
    <property type="entry name" value="PPM"/>
    <property type="match status" value="1"/>
</dbReference>
<dbReference type="FunFam" id="3.30.70.1250:FF:000001">
    <property type="entry name" value="Phosphopentomutase"/>
    <property type="match status" value="1"/>
</dbReference>
<dbReference type="Gene3D" id="3.40.720.10">
    <property type="entry name" value="Alkaline Phosphatase, subunit A"/>
    <property type="match status" value="1"/>
</dbReference>
<dbReference type="Gene3D" id="3.30.70.1250">
    <property type="entry name" value="Phosphopentomutase"/>
    <property type="match status" value="1"/>
</dbReference>
<dbReference type="HAMAP" id="MF_00740">
    <property type="entry name" value="Phosphopentomut"/>
    <property type="match status" value="1"/>
</dbReference>
<dbReference type="InterPro" id="IPR017850">
    <property type="entry name" value="Alkaline_phosphatase_core_sf"/>
</dbReference>
<dbReference type="InterPro" id="IPR010045">
    <property type="entry name" value="DeoB"/>
</dbReference>
<dbReference type="InterPro" id="IPR006124">
    <property type="entry name" value="Metalloenzyme"/>
</dbReference>
<dbReference type="InterPro" id="IPR024052">
    <property type="entry name" value="Phosphopentomutase_DeoB_cap_sf"/>
</dbReference>
<dbReference type="NCBIfam" id="TIGR01696">
    <property type="entry name" value="deoB"/>
    <property type="match status" value="1"/>
</dbReference>
<dbReference type="NCBIfam" id="NF003766">
    <property type="entry name" value="PRK05362.1"/>
    <property type="match status" value="1"/>
</dbReference>
<dbReference type="PANTHER" id="PTHR21110">
    <property type="entry name" value="PHOSPHOPENTOMUTASE"/>
    <property type="match status" value="1"/>
</dbReference>
<dbReference type="PANTHER" id="PTHR21110:SF0">
    <property type="entry name" value="PHOSPHOPENTOMUTASE"/>
    <property type="match status" value="1"/>
</dbReference>
<dbReference type="Pfam" id="PF01676">
    <property type="entry name" value="Metalloenzyme"/>
    <property type="match status" value="1"/>
</dbReference>
<dbReference type="PIRSF" id="PIRSF001491">
    <property type="entry name" value="Ppentomutase"/>
    <property type="match status" value="1"/>
</dbReference>
<dbReference type="SUPFAM" id="SSF53649">
    <property type="entry name" value="Alkaline phosphatase-like"/>
    <property type="match status" value="1"/>
</dbReference>
<dbReference type="SUPFAM" id="SSF143856">
    <property type="entry name" value="DeoB insert domain-like"/>
    <property type="match status" value="1"/>
</dbReference>
<feature type="chain" id="PRO_1000133083" description="Phosphopentomutase">
    <location>
        <begin position="1"/>
        <end position="391"/>
    </location>
</feature>
<feature type="binding site" evidence="1">
    <location>
        <position position="12"/>
    </location>
    <ligand>
        <name>Mn(2+)</name>
        <dbReference type="ChEBI" id="CHEBI:29035"/>
        <label>1</label>
    </ligand>
</feature>
<feature type="binding site" evidence="1">
    <location>
        <position position="285"/>
    </location>
    <ligand>
        <name>Mn(2+)</name>
        <dbReference type="ChEBI" id="CHEBI:29035"/>
        <label>2</label>
    </ligand>
</feature>
<feature type="binding site" evidence="1">
    <location>
        <position position="290"/>
    </location>
    <ligand>
        <name>Mn(2+)</name>
        <dbReference type="ChEBI" id="CHEBI:29035"/>
        <label>2</label>
    </ligand>
</feature>
<feature type="binding site" evidence="1">
    <location>
        <position position="326"/>
    </location>
    <ligand>
        <name>Mn(2+)</name>
        <dbReference type="ChEBI" id="CHEBI:29035"/>
        <label>1</label>
    </ligand>
</feature>
<feature type="binding site" evidence="1">
    <location>
        <position position="327"/>
    </location>
    <ligand>
        <name>Mn(2+)</name>
        <dbReference type="ChEBI" id="CHEBI:29035"/>
        <label>1</label>
    </ligand>
</feature>
<feature type="binding site" evidence="1">
    <location>
        <position position="338"/>
    </location>
    <ligand>
        <name>Mn(2+)</name>
        <dbReference type="ChEBI" id="CHEBI:29035"/>
        <label>2</label>
    </ligand>
</feature>
<keyword id="KW-0963">Cytoplasm</keyword>
<keyword id="KW-0413">Isomerase</keyword>
<keyword id="KW-0464">Manganese</keyword>
<keyword id="KW-0479">Metal-binding</keyword>
<accession>A9B2N4</accession>
<comment type="function">
    <text evidence="1">Isomerase that catalyzes the conversion of deoxy-ribose 1-phosphate (dRib-1-P) and ribose 1-phosphate (Rib-1-P) to deoxy-ribose 5-phosphate (dRib-5-P) and ribose 5-phosphate (Rib-5-P), respectively.</text>
</comment>
<comment type="catalytic activity">
    <reaction evidence="1">
        <text>2-deoxy-alpha-D-ribose 1-phosphate = 2-deoxy-D-ribose 5-phosphate</text>
        <dbReference type="Rhea" id="RHEA:27658"/>
        <dbReference type="ChEBI" id="CHEBI:57259"/>
        <dbReference type="ChEBI" id="CHEBI:62877"/>
        <dbReference type="EC" id="5.4.2.7"/>
    </reaction>
</comment>
<comment type="catalytic activity">
    <reaction evidence="1">
        <text>alpha-D-ribose 1-phosphate = D-ribose 5-phosphate</text>
        <dbReference type="Rhea" id="RHEA:18793"/>
        <dbReference type="ChEBI" id="CHEBI:57720"/>
        <dbReference type="ChEBI" id="CHEBI:78346"/>
        <dbReference type="EC" id="5.4.2.7"/>
    </reaction>
</comment>
<comment type="cofactor">
    <cofactor evidence="1">
        <name>Mn(2+)</name>
        <dbReference type="ChEBI" id="CHEBI:29035"/>
    </cofactor>
    <text evidence="1">Binds 2 manganese ions.</text>
</comment>
<comment type="pathway">
    <text evidence="1">Carbohydrate degradation; 2-deoxy-D-ribose 1-phosphate degradation; D-glyceraldehyde 3-phosphate and acetaldehyde from 2-deoxy-alpha-D-ribose 1-phosphate: step 1/2.</text>
</comment>
<comment type="subcellular location">
    <subcellularLocation>
        <location evidence="1">Cytoplasm</location>
    </subcellularLocation>
</comment>
<comment type="similarity">
    <text evidence="1">Belongs to the phosphopentomutase family.</text>
</comment>
<gene>
    <name evidence="1" type="primary">deoB</name>
    <name type="ordered locus">Haur_2847</name>
</gene>
<organism>
    <name type="scientific">Herpetosiphon aurantiacus (strain ATCC 23779 / DSM 785 / 114-95)</name>
    <dbReference type="NCBI Taxonomy" id="316274"/>
    <lineage>
        <taxon>Bacteria</taxon>
        <taxon>Bacillati</taxon>
        <taxon>Chloroflexota</taxon>
        <taxon>Chloroflexia</taxon>
        <taxon>Herpetosiphonales</taxon>
        <taxon>Herpetosiphonaceae</taxon>
        <taxon>Herpetosiphon</taxon>
    </lineage>
</organism>